<sequence length="358" mass="40195">MSEKVKFEKRESLKEKPDTANLGFGQYFTDYMLSVDYDADQGWHDMKIVPYAPFEISPAAQGLHYGQAVFEGLKAYKHNGEVVLFRPDQNFKRINNSLARLEMPEVDEEALLEGLKQLVDVERDWVPEGEGQSLYIRPFVFATEGILGVRSSHQYKLLIILSPSGAYYGGDTLKSTKIYVEDEYVRAVRGGVGFAKVAGNYAASLLAQTNANKLGYDQVLWLDGVEQKYVEEVGSMNIFFVENGKVVTPALNGSILPGITRKSIIQLAEDLGYEVEERRVSIEELFNAYDKGELTEVFGSGTAAVISPVGTLRYEDREIVINNNEPGKITQKLYDTYTGIQSGKLEDKYGWRVEVPKY</sequence>
<feature type="chain" id="PRO_0000103284" description="Probable branched-chain-amino-acid aminotransferase">
    <location>
        <begin position="1"/>
        <end position="358"/>
    </location>
</feature>
<feature type="modified residue" description="N6-(pyridoxal phosphate)lysine" evidence="1">
    <location>
        <position position="196"/>
    </location>
</feature>
<evidence type="ECO:0000250" key="1"/>
<evidence type="ECO:0000305" key="2"/>
<accession>Q5HRJ8</accession>
<reference key="1">
    <citation type="journal article" date="2005" name="J. Bacteriol.">
        <title>Insights on evolution of virulence and resistance from the complete genome analysis of an early methicillin-resistant Staphylococcus aureus strain and a biofilm-producing methicillin-resistant Staphylococcus epidermidis strain.</title>
        <authorList>
            <person name="Gill S.R."/>
            <person name="Fouts D.E."/>
            <person name="Archer G.L."/>
            <person name="Mongodin E.F."/>
            <person name="DeBoy R.T."/>
            <person name="Ravel J."/>
            <person name="Paulsen I.T."/>
            <person name="Kolonay J.F."/>
            <person name="Brinkac L.M."/>
            <person name="Beanan M.J."/>
            <person name="Dodson R.J."/>
            <person name="Daugherty S.C."/>
            <person name="Madupu R."/>
            <person name="Angiuoli S.V."/>
            <person name="Durkin A.S."/>
            <person name="Haft D.H."/>
            <person name="Vamathevan J.J."/>
            <person name="Khouri H."/>
            <person name="Utterback T.R."/>
            <person name="Lee C."/>
            <person name="Dimitrov G."/>
            <person name="Jiang L."/>
            <person name="Qin H."/>
            <person name="Weidman J."/>
            <person name="Tran K."/>
            <person name="Kang K.H."/>
            <person name="Hance I.R."/>
            <person name="Nelson K.E."/>
            <person name="Fraser C.M."/>
        </authorList>
    </citation>
    <scope>NUCLEOTIDE SEQUENCE [LARGE SCALE GENOMIC DNA]</scope>
    <source>
        <strain>ATCC 35984 / DSM 28319 / BCRC 17069 / CCUG 31568 / BM 3577 / RP62A</strain>
    </source>
</reference>
<organism>
    <name type="scientific">Staphylococcus epidermidis (strain ATCC 35984 / DSM 28319 / BCRC 17069 / CCUG 31568 / BM 3577 / RP62A)</name>
    <dbReference type="NCBI Taxonomy" id="176279"/>
    <lineage>
        <taxon>Bacteria</taxon>
        <taxon>Bacillati</taxon>
        <taxon>Bacillota</taxon>
        <taxon>Bacilli</taxon>
        <taxon>Bacillales</taxon>
        <taxon>Staphylococcaceae</taxon>
        <taxon>Staphylococcus</taxon>
    </lineage>
</organism>
<keyword id="KW-0028">Amino-acid biosynthesis</keyword>
<keyword id="KW-0032">Aminotransferase</keyword>
<keyword id="KW-0100">Branched-chain amino acid biosynthesis</keyword>
<keyword id="KW-0663">Pyridoxal phosphate</keyword>
<keyword id="KW-1185">Reference proteome</keyword>
<keyword id="KW-0808">Transferase</keyword>
<proteinExistence type="inferred from homology"/>
<name>ILVE_STAEQ</name>
<dbReference type="EC" id="2.6.1.42"/>
<dbReference type="EMBL" id="CP000029">
    <property type="protein sequence ID" value="AAW53608.1"/>
    <property type="molecule type" value="Genomic_DNA"/>
</dbReference>
<dbReference type="RefSeq" id="WP_002486095.1">
    <property type="nucleotide sequence ID" value="NC_002976.3"/>
</dbReference>
<dbReference type="SMR" id="Q5HRJ8"/>
<dbReference type="STRING" id="176279.SERP0195"/>
<dbReference type="KEGG" id="ser:SERP0195"/>
<dbReference type="eggNOG" id="COG0115">
    <property type="taxonomic scope" value="Bacteria"/>
</dbReference>
<dbReference type="HOGENOM" id="CLU_031922_0_2_9"/>
<dbReference type="UniPathway" id="UPA00047">
    <property type="reaction ID" value="UER00058"/>
</dbReference>
<dbReference type="UniPathway" id="UPA00048">
    <property type="reaction ID" value="UER00073"/>
</dbReference>
<dbReference type="UniPathway" id="UPA00049">
    <property type="reaction ID" value="UER00062"/>
</dbReference>
<dbReference type="Proteomes" id="UP000000531">
    <property type="component" value="Chromosome"/>
</dbReference>
<dbReference type="GO" id="GO:0052656">
    <property type="term" value="F:L-isoleucine-2-oxoglutarate transaminase activity"/>
    <property type="evidence" value="ECO:0007669"/>
    <property type="project" value="RHEA"/>
</dbReference>
<dbReference type="GO" id="GO:0052654">
    <property type="term" value="F:L-leucine-2-oxoglutarate transaminase activity"/>
    <property type="evidence" value="ECO:0007669"/>
    <property type="project" value="RHEA"/>
</dbReference>
<dbReference type="GO" id="GO:0052655">
    <property type="term" value="F:L-valine-2-oxoglutarate transaminase activity"/>
    <property type="evidence" value="ECO:0007669"/>
    <property type="project" value="RHEA"/>
</dbReference>
<dbReference type="GO" id="GO:0009097">
    <property type="term" value="P:isoleucine biosynthetic process"/>
    <property type="evidence" value="ECO:0007669"/>
    <property type="project" value="UniProtKB-UniPathway"/>
</dbReference>
<dbReference type="GO" id="GO:0009098">
    <property type="term" value="P:L-leucine biosynthetic process"/>
    <property type="evidence" value="ECO:0007669"/>
    <property type="project" value="UniProtKB-UniPathway"/>
</dbReference>
<dbReference type="GO" id="GO:0009099">
    <property type="term" value="P:L-valine biosynthetic process"/>
    <property type="evidence" value="ECO:0007669"/>
    <property type="project" value="UniProtKB-UniPathway"/>
</dbReference>
<dbReference type="CDD" id="cd01557">
    <property type="entry name" value="BCAT_beta_family"/>
    <property type="match status" value="1"/>
</dbReference>
<dbReference type="Gene3D" id="3.30.470.10">
    <property type="match status" value="1"/>
</dbReference>
<dbReference type="Gene3D" id="3.20.10.10">
    <property type="entry name" value="D-amino Acid Aminotransferase, subunit A, domain 2"/>
    <property type="match status" value="1"/>
</dbReference>
<dbReference type="InterPro" id="IPR001544">
    <property type="entry name" value="Aminotrans_IV"/>
</dbReference>
<dbReference type="InterPro" id="IPR018300">
    <property type="entry name" value="Aminotrans_IV_CS"/>
</dbReference>
<dbReference type="InterPro" id="IPR036038">
    <property type="entry name" value="Aminotransferase-like"/>
</dbReference>
<dbReference type="InterPro" id="IPR005786">
    <property type="entry name" value="B_amino_transII"/>
</dbReference>
<dbReference type="InterPro" id="IPR043132">
    <property type="entry name" value="BCAT-like_C"/>
</dbReference>
<dbReference type="InterPro" id="IPR043131">
    <property type="entry name" value="BCAT-like_N"/>
</dbReference>
<dbReference type="InterPro" id="IPR033939">
    <property type="entry name" value="BCAT_family"/>
</dbReference>
<dbReference type="NCBIfam" id="TIGR01123">
    <property type="entry name" value="ilvE_II"/>
    <property type="match status" value="1"/>
</dbReference>
<dbReference type="NCBIfam" id="NF009897">
    <property type="entry name" value="PRK13357.1"/>
    <property type="match status" value="1"/>
</dbReference>
<dbReference type="PANTHER" id="PTHR11825:SF44">
    <property type="entry name" value="BRANCHED-CHAIN-AMINO-ACID AMINOTRANSFERASE"/>
    <property type="match status" value="1"/>
</dbReference>
<dbReference type="PANTHER" id="PTHR11825">
    <property type="entry name" value="SUBGROUP IIII AMINOTRANSFERASE"/>
    <property type="match status" value="1"/>
</dbReference>
<dbReference type="Pfam" id="PF01063">
    <property type="entry name" value="Aminotran_4"/>
    <property type="match status" value="1"/>
</dbReference>
<dbReference type="PIRSF" id="PIRSF006468">
    <property type="entry name" value="BCAT1"/>
    <property type="match status" value="1"/>
</dbReference>
<dbReference type="SUPFAM" id="SSF56752">
    <property type="entry name" value="D-aminoacid aminotransferase-like PLP-dependent enzymes"/>
    <property type="match status" value="1"/>
</dbReference>
<dbReference type="PROSITE" id="PS00770">
    <property type="entry name" value="AA_TRANSFER_CLASS_4"/>
    <property type="match status" value="1"/>
</dbReference>
<gene>
    <name type="primary">ilvE</name>
    <name type="ordered locus">SERP0195</name>
</gene>
<comment type="function">
    <text evidence="1">Acts on leucine, isoleucine and valine.</text>
</comment>
<comment type="catalytic activity">
    <reaction>
        <text>L-leucine + 2-oxoglutarate = 4-methyl-2-oxopentanoate + L-glutamate</text>
        <dbReference type="Rhea" id="RHEA:18321"/>
        <dbReference type="ChEBI" id="CHEBI:16810"/>
        <dbReference type="ChEBI" id="CHEBI:17865"/>
        <dbReference type="ChEBI" id="CHEBI:29985"/>
        <dbReference type="ChEBI" id="CHEBI:57427"/>
        <dbReference type="EC" id="2.6.1.42"/>
    </reaction>
</comment>
<comment type="catalytic activity">
    <reaction>
        <text>L-isoleucine + 2-oxoglutarate = (S)-3-methyl-2-oxopentanoate + L-glutamate</text>
        <dbReference type="Rhea" id="RHEA:24801"/>
        <dbReference type="ChEBI" id="CHEBI:16810"/>
        <dbReference type="ChEBI" id="CHEBI:29985"/>
        <dbReference type="ChEBI" id="CHEBI:35146"/>
        <dbReference type="ChEBI" id="CHEBI:58045"/>
        <dbReference type="EC" id="2.6.1.42"/>
    </reaction>
</comment>
<comment type="catalytic activity">
    <reaction>
        <text>L-valine + 2-oxoglutarate = 3-methyl-2-oxobutanoate + L-glutamate</text>
        <dbReference type="Rhea" id="RHEA:24813"/>
        <dbReference type="ChEBI" id="CHEBI:11851"/>
        <dbReference type="ChEBI" id="CHEBI:16810"/>
        <dbReference type="ChEBI" id="CHEBI:29985"/>
        <dbReference type="ChEBI" id="CHEBI:57762"/>
        <dbReference type="EC" id="2.6.1.42"/>
    </reaction>
</comment>
<comment type="cofactor">
    <cofactor evidence="1">
        <name>pyridoxal 5'-phosphate</name>
        <dbReference type="ChEBI" id="CHEBI:597326"/>
    </cofactor>
</comment>
<comment type="pathway">
    <text>Amino-acid biosynthesis; L-isoleucine biosynthesis; L-isoleucine from 2-oxobutanoate: step 4/4.</text>
</comment>
<comment type="pathway">
    <text>Amino-acid biosynthesis; L-leucine biosynthesis; L-leucine from 3-methyl-2-oxobutanoate: step 4/4.</text>
</comment>
<comment type="pathway">
    <text>Amino-acid biosynthesis; L-valine biosynthesis; L-valine from pyruvate: step 4/4.</text>
</comment>
<comment type="similarity">
    <text evidence="2">Belongs to the class-IV pyridoxal-phosphate-dependent aminotransferase family.</text>
</comment>
<protein>
    <recommendedName>
        <fullName>Probable branched-chain-amino-acid aminotransferase</fullName>
        <shortName>BCAT</shortName>
        <ecNumber>2.6.1.42</ecNumber>
    </recommendedName>
</protein>